<evidence type="ECO:0000255" key="1">
    <source>
        <dbReference type="HAMAP-Rule" id="MF_00123"/>
    </source>
</evidence>
<gene>
    <name evidence="1" type="primary">argS</name>
    <name type="ordered locus">Krad_1250</name>
</gene>
<name>SYR_KINRD</name>
<proteinExistence type="inferred from homology"/>
<keyword id="KW-0030">Aminoacyl-tRNA synthetase</keyword>
<keyword id="KW-0067">ATP-binding</keyword>
<keyword id="KW-0963">Cytoplasm</keyword>
<keyword id="KW-0436">Ligase</keyword>
<keyword id="KW-0547">Nucleotide-binding</keyword>
<keyword id="KW-0648">Protein biosynthesis</keyword>
<keyword id="KW-1185">Reference proteome</keyword>
<protein>
    <recommendedName>
        <fullName evidence="1">Arginine--tRNA ligase</fullName>
        <ecNumber evidence="1">6.1.1.19</ecNumber>
    </recommendedName>
    <alternativeName>
        <fullName evidence="1">Arginyl-tRNA synthetase</fullName>
        <shortName evidence="1">ArgRS</shortName>
    </alternativeName>
</protein>
<reference key="1">
    <citation type="journal article" date="2008" name="PLoS ONE">
        <title>Survival in nuclear waste, extreme resistance, and potential applications gleaned from the genome sequence of Kineococcus radiotolerans SRS30216.</title>
        <authorList>
            <person name="Bagwell C.E."/>
            <person name="Bhat S."/>
            <person name="Hawkins G.M."/>
            <person name="Smith B.W."/>
            <person name="Biswas T."/>
            <person name="Hoover T.R."/>
            <person name="Saunders E."/>
            <person name="Han C.S."/>
            <person name="Tsodikov O.V."/>
            <person name="Shimkets L.J."/>
        </authorList>
    </citation>
    <scope>NUCLEOTIDE SEQUENCE [LARGE SCALE GENOMIC DNA]</scope>
    <source>
        <strain>ATCC BAA-149 / DSM 14245 / SRS30216</strain>
    </source>
</reference>
<organism>
    <name type="scientific">Kineococcus radiotolerans (strain ATCC BAA-149 / DSM 14245 / SRS30216)</name>
    <dbReference type="NCBI Taxonomy" id="266940"/>
    <lineage>
        <taxon>Bacteria</taxon>
        <taxon>Bacillati</taxon>
        <taxon>Actinomycetota</taxon>
        <taxon>Actinomycetes</taxon>
        <taxon>Kineosporiales</taxon>
        <taxon>Kineosporiaceae</taxon>
        <taxon>Kineococcus</taxon>
    </lineage>
</organism>
<accession>A6W7E9</accession>
<feature type="chain" id="PRO_1000076218" description="Arginine--tRNA ligase">
    <location>
        <begin position="1"/>
        <end position="554"/>
    </location>
</feature>
<feature type="short sequence motif" description="'HIGH' region">
    <location>
        <begin position="132"/>
        <end position="142"/>
    </location>
</feature>
<dbReference type="EC" id="6.1.1.19" evidence="1"/>
<dbReference type="EMBL" id="CP000750">
    <property type="protein sequence ID" value="ABS02738.1"/>
    <property type="molecule type" value="Genomic_DNA"/>
</dbReference>
<dbReference type="RefSeq" id="WP_012084406.1">
    <property type="nucleotide sequence ID" value="NC_009664.2"/>
</dbReference>
<dbReference type="SMR" id="A6W7E9"/>
<dbReference type="STRING" id="266940.Krad_1250"/>
<dbReference type="KEGG" id="kra:Krad_1250"/>
<dbReference type="eggNOG" id="COG0018">
    <property type="taxonomic scope" value="Bacteria"/>
</dbReference>
<dbReference type="HOGENOM" id="CLU_006406_0_1_11"/>
<dbReference type="OrthoDB" id="9803211at2"/>
<dbReference type="Proteomes" id="UP000001116">
    <property type="component" value="Chromosome"/>
</dbReference>
<dbReference type="GO" id="GO:0005737">
    <property type="term" value="C:cytoplasm"/>
    <property type="evidence" value="ECO:0007669"/>
    <property type="project" value="UniProtKB-SubCell"/>
</dbReference>
<dbReference type="GO" id="GO:0004814">
    <property type="term" value="F:arginine-tRNA ligase activity"/>
    <property type="evidence" value="ECO:0007669"/>
    <property type="project" value="UniProtKB-UniRule"/>
</dbReference>
<dbReference type="GO" id="GO:0005524">
    <property type="term" value="F:ATP binding"/>
    <property type="evidence" value="ECO:0007669"/>
    <property type="project" value="UniProtKB-UniRule"/>
</dbReference>
<dbReference type="GO" id="GO:0006420">
    <property type="term" value="P:arginyl-tRNA aminoacylation"/>
    <property type="evidence" value="ECO:0007669"/>
    <property type="project" value="UniProtKB-UniRule"/>
</dbReference>
<dbReference type="CDD" id="cd00671">
    <property type="entry name" value="ArgRS_core"/>
    <property type="match status" value="1"/>
</dbReference>
<dbReference type="FunFam" id="1.10.730.10:FF:000008">
    <property type="entry name" value="Arginine--tRNA ligase"/>
    <property type="match status" value="1"/>
</dbReference>
<dbReference type="FunFam" id="3.40.50.620:FF:000062">
    <property type="entry name" value="Arginine--tRNA ligase"/>
    <property type="match status" value="1"/>
</dbReference>
<dbReference type="Gene3D" id="3.30.1360.70">
    <property type="entry name" value="Arginyl tRNA synthetase N-terminal domain"/>
    <property type="match status" value="1"/>
</dbReference>
<dbReference type="Gene3D" id="3.40.50.620">
    <property type="entry name" value="HUPs"/>
    <property type="match status" value="1"/>
</dbReference>
<dbReference type="Gene3D" id="1.10.730.10">
    <property type="entry name" value="Isoleucyl-tRNA Synthetase, Domain 1"/>
    <property type="match status" value="1"/>
</dbReference>
<dbReference type="HAMAP" id="MF_00123">
    <property type="entry name" value="Arg_tRNA_synth"/>
    <property type="match status" value="1"/>
</dbReference>
<dbReference type="InterPro" id="IPR001412">
    <property type="entry name" value="aa-tRNA-synth_I_CS"/>
</dbReference>
<dbReference type="InterPro" id="IPR001278">
    <property type="entry name" value="Arg-tRNA-ligase"/>
</dbReference>
<dbReference type="InterPro" id="IPR005148">
    <property type="entry name" value="Arg-tRNA-synth_N"/>
</dbReference>
<dbReference type="InterPro" id="IPR036695">
    <property type="entry name" value="Arg-tRNA-synth_N_sf"/>
</dbReference>
<dbReference type="InterPro" id="IPR035684">
    <property type="entry name" value="ArgRS_core"/>
</dbReference>
<dbReference type="InterPro" id="IPR008909">
    <property type="entry name" value="DALR_anticod-bd"/>
</dbReference>
<dbReference type="InterPro" id="IPR014729">
    <property type="entry name" value="Rossmann-like_a/b/a_fold"/>
</dbReference>
<dbReference type="InterPro" id="IPR009080">
    <property type="entry name" value="tRNAsynth_Ia_anticodon-bd"/>
</dbReference>
<dbReference type="NCBIfam" id="TIGR00456">
    <property type="entry name" value="argS"/>
    <property type="match status" value="1"/>
</dbReference>
<dbReference type="PANTHER" id="PTHR11956:SF5">
    <property type="entry name" value="ARGININE--TRNA LIGASE, CYTOPLASMIC"/>
    <property type="match status" value="1"/>
</dbReference>
<dbReference type="PANTHER" id="PTHR11956">
    <property type="entry name" value="ARGINYL-TRNA SYNTHETASE"/>
    <property type="match status" value="1"/>
</dbReference>
<dbReference type="Pfam" id="PF03485">
    <property type="entry name" value="Arg_tRNA_synt_N"/>
    <property type="match status" value="1"/>
</dbReference>
<dbReference type="Pfam" id="PF05746">
    <property type="entry name" value="DALR_1"/>
    <property type="match status" value="1"/>
</dbReference>
<dbReference type="Pfam" id="PF00750">
    <property type="entry name" value="tRNA-synt_1d"/>
    <property type="match status" value="2"/>
</dbReference>
<dbReference type="PRINTS" id="PR01038">
    <property type="entry name" value="TRNASYNTHARG"/>
</dbReference>
<dbReference type="SMART" id="SM01016">
    <property type="entry name" value="Arg_tRNA_synt_N"/>
    <property type="match status" value="1"/>
</dbReference>
<dbReference type="SMART" id="SM00836">
    <property type="entry name" value="DALR_1"/>
    <property type="match status" value="1"/>
</dbReference>
<dbReference type="SUPFAM" id="SSF47323">
    <property type="entry name" value="Anticodon-binding domain of a subclass of class I aminoacyl-tRNA synthetases"/>
    <property type="match status" value="1"/>
</dbReference>
<dbReference type="SUPFAM" id="SSF55190">
    <property type="entry name" value="Arginyl-tRNA synthetase (ArgRS), N-terminal 'additional' domain"/>
    <property type="match status" value="1"/>
</dbReference>
<dbReference type="SUPFAM" id="SSF52374">
    <property type="entry name" value="Nucleotidylyl transferase"/>
    <property type="match status" value="1"/>
</dbReference>
<dbReference type="PROSITE" id="PS00178">
    <property type="entry name" value="AA_TRNA_LIGASE_I"/>
    <property type="match status" value="1"/>
</dbReference>
<comment type="catalytic activity">
    <reaction evidence="1">
        <text>tRNA(Arg) + L-arginine + ATP = L-arginyl-tRNA(Arg) + AMP + diphosphate</text>
        <dbReference type="Rhea" id="RHEA:20301"/>
        <dbReference type="Rhea" id="RHEA-COMP:9658"/>
        <dbReference type="Rhea" id="RHEA-COMP:9673"/>
        <dbReference type="ChEBI" id="CHEBI:30616"/>
        <dbReference type="ChEBI" id="CHEBI:32682"/>
        <dbReference type="ChEBI" id="CHEBI:33019"/>
        <dbReference type="ChEBI" id="CHEBI:78442"/>
        <dbReference type="ChEBI" id="CHEBI:78513"/>
        <dbReference type="ChEBI" id="CHEBI:456215"/>
        <dbReference type="EC" id="6.1.1.19"/>
    </reaction>
</comment>
<comment type="subunit">
    <text evidence="1">Monomer.</text>
</comment>
<comment type="subcellular location">
    <subcellularLocation>
        <location evidence="1">Cytoplasm</location>
    </subcellularLocation>
</comment>
<comment type="similarity">
    <text evidence="1">Belongs to the class-I aminoacyl-tRNA synthetase family.</text>
</comment>
<sequence length="554" mass="60028">MTPAELSAALRDALTAAVAAGELTLDPADVPAEVRVERPKNRDHGDWATSVALQLAKKAGLPPREVAALVQRRLLEVEGVRAVDIAGPGFLNVTLDAAAAGELARSVVEAGPAFGRSATPTGERINLEFVSANPTGPIHLGGTRWAAVGDSLARVLEAAGATVTREYYFNDHGAQIDRFARSLLARANDEPAPEDGYGGDYVTDIAAAVLAEAPGLLDLPREEQQEVFRREGVELMFAEIRQSLAEFGVEFDVYFHEDSLHTSGAVGRAVQKLRDLGRIYEADGATWLRTSDFGDDKDRVVIKSDGHPAYISGDLAYYLDKRERGFDRCVLMLGADHHGYVPRMMAMCAAFGDTPGVNLEILIGQMVNLLKDGVPVRMSKRAGTVVTMEDLVEAVGVDAARYSLVRSSVDSSIDIDLDLLTRRSNDNPVFYVQYAHARTANVAVNAAAAGVRREDAFDPSLLTEETESLLLAALAEFPAVVARAGELREPHRVARYLEELAGRFHKFYDACRVTPRAGEEVTDVHRTRLWLNDATRQVLANGLGLLGVSSPDRM</sequence>